<reference evidence="13" key="1">
    <citation type="journal article" date="2000" name="Science">
        <title>The genome sequence of Drosophila melanogaster.</title>
        <authorList>
            <person name="Adams M.D."/>
            <person name="Celniker S.E."/>
            <person name="Holt R.A."/>
            <person name="Evans C.A."/>
            <person name="Gocayne J.D."/>
            <person name="Amanatides P.G."/>
            <person name="Scherer S.E."/>
            <person name="Li P.W."/>
            <person name="Hoskins R.A."/>
            <person name="Galle R.F."/>
            <person name="George R.A."/>
            <person name="Lewis S.E."/>
            <person name="Richards S."/>
            <person name="Ashburner M."/>
            <person name="Henderson S.N."/>
            <person name="Sutton G.G."/>
            <person name="Wortman J.R."/>
            <person name="Yandell M.D."/>
            <person name="Zhang Q."/>
            <person name="Chen L.X."/>
            <person name="Brandon R.C."/>
            <person name="Rogers Y.-H.C."/>
            <person name="Blazej R.G."/>
            <person name="Champe M."/>
            <person name="Pfeiffer B.D."/>
            <person name="Wan K.H."/>
            <person name="Doyle C."/>
            <person name="Baxter E.G."/>
            <person name="Helt G."/>
            <person name="Nelson C.R."/>
            <person name="Miklos G.L.G."/>
            <person name="Abril J.F."/>
            <person name="Agbayani A."/>
            <person name="An H.-J."/>
            <person name="Andrews-Pfannkoch C."/>
            <person name="Baldwin D."/>
            <person name="Ballew R.M."/>
            <person name="Basu A."/>
            <person name="Baxendale J."/>
            <person name="Bayraktaroglu L."/>
            <person name="Beasley E.M."/>
            <person name="Beeson K.Y."/>
            <person name="Benos P.V."/>
            <person name="Berman B.P."/>
            <person name="Bhandari D."/>
            <person name="Bolshakov S."/>
            <person name="Borkova D."/>
            <person name="Botchan M.R."/>
            <person name="Bouck J."/>
            <person name="Brokstein P."/>
            <person name="Brottier P."/>
            <person name="Burtis K.C."/>
            <person name="Busam D.A."/>
            <person name="Butler H."/>
            <person name="Cadieu E."/>
            <person name="Center A."/>
            <person name="Chandra I."/>
            <person name="Cherry J.M."/>
            <person name="Cawley S."/>
            <person name="Dahlke C."/>
            <person name="Davenport L.B."/>
            <person name="Davies P."/>
            <person name="de Pablos B."/>
            <person name="Delcher A."/>
            <person name="Deng Z."/>
            <person name="Mays A.D."/>
            <person name="Dew I."/>
            <person name="Dietz S.M."/>
            <person name="Dodson K."/>
            <person name="Doup L.E."/>
            <person name="Downes M."/>
            <person name="Dugan-Rocha S."/>
            <person name="Dunkov B.C."/>
            <person name="Dunn P."/>
            <person name="Durbin K.J."/>
            <person name="Evangelista C.C."/>
            <person name="Ferraz C."/>
            <person name="Ferriera S."/>
            <person name="Fleischmann W."/>
            <person name="Fosler C."/>
            <person name="Gabrielian A.E."/>
            <person name="Garg N.S."/>
            <person name="Gelbart W.M."/>
            <person name="Glasser K."/>
            <person name="Glodek A."/>
            <person name="Gong F."/>
            <person name="Gorrell J.H."/>
            <person name="Gu Z."/>
            <person name="Guan P."/>
            <person name="Harris M."/>
            <person name="Harris N.L."/>
            <person name="Harvey D.A."/>
            <person name="Heiman T.J."/>
            <person name="Hernandez J.R."/>
            <person name="Houck J."/>
            <person name="Hostin D."/>
            <person name="Houston K.A."/>
            <person name="Howland T.J."/>
            <person name="Wei M.-H."/>
            <person name="Ibegwam C."/>
            <person name="Jalali M."/>
            <person name="Kalush F."/>
            <person name="Karpen G.H."/>
            <person name="Ke Z."/>
            <person name="Kennison J.A."/>
            <person name="Ketchum K.A."/>
            <person name="Kimmel B.E."/>
            <person name="Kodira C.D."/>
            <person name="Kraft C.L."/>
            <person name="Kravitz S."/>
            <person name="Kulp D."/>
            <person name="Lai Z."/>
            <person name="Lasko P."/>
            <person name="Lei Y."/>
            <person name="Levitsky A.A."/>
            <person name="Li J.H."/>
            <person name="Li Z."/>
            <person name="Liang Y."/>
            <person name="Lin X."/>
            <person name="Liu X."/>
            <person name="Mattei B."/>
            <person name="McIntosh T.C."/>
            <person name="McLeod M.P."/>
            <person name="McPherson D."/>
            <person name="Merkulov G."/>
            <person name="Milshina N.V."/>
            <person name="Mobarry C."/>
            <person name="Morris J."/>
            <person name="Moshrefi A."/>
            <person name="Mount S.M."/>
            <person name="Moy M."/>
            <person name="Murphy B."/>
            <person name="Murphy L."/>
            <person name="Muzny D.M."/>
            <person name="Nelson D.L."/>
            <person name="Nelson D.R."/>
            <person name="Nelson K.A."/>
            <person name="Nixon K."/>
            <person name="Nusskern D.R."/>
            <person name="Pacleb J.M."/>
            <person name="Palazzolo M."/>
            <person name="Pittman G.S."/>
            <person name="Pan S."/>
            <person name="Pollard J."/>
            <person name="Puri V."/>
            <person name="Reese M.G."/>
            <person name="Reinert K."/>
            <person name="Remington K."/>
            <person name="Saunders R.D.C."/>
            <person name="Scheeler F."/>
            <person name="Shen H."/>
            <person name="Shue B.C."/>
            <person name="Siden-Kiamos I."/>
            <person name="Simpson M."/>
            <person name="Skupski M.P."/>
            <person name="Smith T.J."/>
            <person name="Spier E."/>
            <person name="Spradling A.C."/>
            <person name="Stapleton M."/>
            <person name="Strong R."/>
            <person name="Sun E."/>
            <person name="Svirskas R."/>
            <person name="Tector C."/>
            <person name="Turner R."/>
            <person name="Venter E."/>
            <person name="Wang A.H."/>
            <person name="Wang X."/>
            <person name="Wang Z.-Y."/>
            <person name="Wassarman D.A."/>
            <person name="Weinstock G.M."/>
            <person name="Weissenbach J."/>
            <person name="Williams S.M."/>
            <person name="Woodage T."/>
            <person name="Worley K.C."/>
            <person name="Wu D."/>
            <person name="Yang S."/>
            <person name="Yao Q.A."/>
            <person name="Ye J."/>
            <person name="Yeh R.-F."/>
            <person name="Zaveri J.S."/>
            <person name="Zhan M."/>
            <person name="Zhang G."/>
            <person name="Zhao Q."/>
            <person name="Zheng L."/>
            <person name="Zheng X.H."/>
            <person name="Zhong F.N."/>
            <person name="Zhong W."/>
            <person name="Zhou X."/>
            <person name="Zhu S.C."/>
            <person name="Zhu X."/>
            <person name="Smith H.O."/>
            <person name="Gibbs R.A."/>
            <person name="Myers E.W."/>
            <person name="Rubin G.M."/>
            <person name="Venter J.C."/>
        </authorList>
    </citation>
    <scope>NUCLEOTIDE SEQUENCE [LARGE SCALE GENOMIC DNA]</scope>
    <source>
        <strain evidence="13">Berkeley</strain>
    </source>
</reference>
<reference evidence="13" key="2">
    <citation type="journal article" date="2002" name="Genome Biol.">
        <title>Annotation of the Drosophila melanogaster euchromatic genome: a systematic review.</title>
        <authorList>
            <person name="Misra S."/>
            <person name="Crosby M.A."/>
            <person name="Mungall C.J."/>
            <person name="Matthews B.B."/>
            <person name="Campbell K.S."/>
            <person name="Hradecky P."/>
            <person name="Huang Y."/>
            <person name="Kaminker J.S."/>
            <person name="Millburn G.H."/>
            <person name="Prochnik S.E."/>
            <person name="Smith C.D."/>
            <person name="Tupy J.L."/>
            <person name="Whitfield E.J."/>
            <person name="Bayraktaroglu L."/>
            <person name="Berman B.P."/>
            <person name="Bettencourt B.R."/>
            <person name="Celniker S.E."/>
            <person name="de Grey A.D.N.J."/>
            <person name="Drysdale R.A."/>
            <person name="Harris N.L."/>
            <person name="Richter J."/>
            <person name="Russo S."/>
            <person name="Schroeder A.J."/>
            <person name="Shu S.Q."/>
            <person name="Stapleton M."/>
            <person name="Yamada C."/>
            <person name="Ashburner M."/>
            <person name="Gelbart W.M."/>
            <person name="Rubin G.M."/>
            <person name="Lewis S.E."/>
        </authorList>
    </citation>
    <scope>GENOME REANNOTATION</scope>
    <source>
        <strain evidence="13">Berkeley</strain>
    </source>
</reference>
<reference evidence="11" key="3">
    <citation type="submission" date="2008-09" db="EMBL/GenBank/DDBJ databases">
        <authorList>
            <person name="Carlson J."/>
            <person name="Booth B."/>
            <person name="Frise E."/>
            <person name="Park S."/>
            <person name="Wan K."/>
            <person name="Yu C."/>
            <person name="Celniker S."/>
        </authorList>
    </citation>
    <scope>NUCLEOTIDE SEQUENCE [LARGE SCALE MRNA]</scope>
    <source>
        <strain evidence="11">Berkeley</strain>
        <tissue evidence="11">Head</tissue>
    </source>
</reference>
<reference evidence="10" key="4">
    <citation type="journal article" date="2014" name="PLoS ONE">
        <title>Carrier of Wingless (Cow), a secreted heparan sulfate proteoglycan, promotes extracellular transport of Wingless.</title>
        <authorList>
            <person name="Chang Y.H."/>
            <person name="Sun Y.H."/>
        </authorList>
    </citation>
    <scope>FUNCTION</scope>
    <scope>INTERACTION WITH WG</scope>
    <scope>SUBCELLULAR LOCATION</scope>
    <scope>TISSUE SPECIFICITY</scope>
    <scope>DISRUPTION PHENOTYPE</scope>
    <scope>MUTAGENESIS OF 287-SER-GLY-288 AND 331-SER-GLY-332</scope>
</reference>
<sequence>MKHSPLIASACLALVLMSSSLIGSTEARNKKKYVGETGGDFEFIDEINKNTQSNKNLGEHKRWIHDPSSDLCRPLNCKKREICLLEDEFSAVCVSKKELHKNRDEIITKAKYLEEEAKRRVNQQDNQDSQDAEDINNDDEDNSSDGGSSNSSPTGTNNAQASVQGNEETDDEDKSLSLGDDDESKEDDVFYENSIAAGDKQQQQQQLSQPAAGPSVIQQDDDEELDNCKPCPVAKPTFLCGADNRTYSSLCRLDYHNCIHSTSIRIACKGFCPCKEIVDGKRLQRISGYNNKYNKKISLDQQQQQQQQQQQQQQQQQAYKDSNNNNIMMNSGNIMGGNNNDFNTIMNDKEDNNRHNNHINAQYTFTPEEIKYDNKHYKYLKYTAYKKDSKYQEDKHKMRNYNEVVEKQQQKFNKNSNLNAYPSKSAECKPQQLTAIGNRLLDWFSVIMADSKKRRQHSQKSKAHFPPACKTEAKWMFGHLDLNNDGQLSLQEMYDLEHDQNERCIKPFIDTCDLDTDSSINTREWCRCFEKTDRPCAAVRRRIAGDFAGAYAPDCDIQGFYKPTQCHNSVGVCWCVDKHGVEFANTRTRGKPNCESVVNNAASLTSDDEDEGADDEDSAEGSADQMLVF</sequence>
<organism evidence="13">
    <name type="scientific">Drosophila melanogaster</name>
    <name type="common">Fruit fly</name>
    <dbReference type="NCBI Taxonomy" id="7227"/>
    <lineage>
        <taxon>Eukaryota</taxon>
        <taxon>Metazoa</taxon>
        <taxon>Ecdysozoa</taxon>
        <taxon>Arthropoda</taxon>
        <taxon>Hexapoda</taxon>
        <taxon>Insecta</taxon>
        <taxon>Pterygota</taxon>
        <taxon>Neoptera</taxon>
        <taxon>Endopterygota</taxon>
        <taxon>Diptera</taxon>
        <taxon>Brachycera</taxon>
        <taxon>Muscomorpha</taxon>
        <taxon>Ephydroidea</taxon>
        <taxon>Drosophilidae</taxon>
        <taxon>Drosophila</taxon>
        <taxon>Sophophora</taxon>
    </lineage>
</organism>
<dbReference type="EMBL" id="AE014297">
    <property type="protein sequence ID" value="AAF56093.3"/>
    <property type="molecule type" value="Genomic_DNA"/>
</dbReference>
<dbReference type="EMBL" id="AE014297">
    <property type="protein sequence ID" value="ACZ94990.1"/>
    <property type="molecule type" value="Genomic_DNA"/>
</dbReference>
<dbReference type="EMBL" id="BT044452">
    <property type="protein sequence ID" value="ACH92517.1"/>
    <property type="molecule type" value="mRNA"/>
</dbReference>
<dbReference type="RefSeq" id="NP_001097883.2">
    <property type="nucleotide sequence ID" value="NM_001104413.3"/>
</dbReference>
<dbReference type="RefSeq" id="NP_001163695.1">
    <property type="nucleotide sequence ID" value="NM_001170224.2"/>
</dbReference>
<dbReference type="SMR" id="Q9VCR3"/>
<dbReference type="FunCoup" id="Q9VCR3">
    <property type="interactions" value="165"/>
</dbReference>
<dbReference type="IntAct" id="Q9VCR3">
    <property type="interactions" value="4"/>
</dbReference>
<dbReference type="STRING" id="7227.FBpp0307957"/>
<dbReference type="GlyCosmos" id="Q9VCR3">
    <property type="glycosylation" value="2 sites, No reported glycans"/>
</dbReference>
<dbReference type="GlyGen" id="Q9VCR3">
    <property type="glycosylation" value="2 sites"/>
</dbReference>
<dbReference type="PaxDb" id="7227-FBpp0291233"/>
<dbReference type="DNASU" id="42733"/>
<dbReference type="EnsemblMetazoa" id="FBtr0302022">
    <property type="protein sequence ID" value="FBpp0291232"/>
    <property type="gene ID" value="FBgn0039054"/>
</dbReference>
<dbReference type="EnsemblMetazoa" id="FBtr0302023">
    <property type="protein sequence ID" value="FBpp0291233"/>
    <property type="gene ID" value="FBgn0039054"/>
</dbReference>
<dbReference type="GeneID" id="42733"/>
<dbReference type="KEGG" id="dme:Dmel_CG13830"/>
<dbReference type="UCSC" id="CG13830-RB">
    <property type="organism name" value="d. melanogaster"/>
</dbReference>
<dbReference type="AGR" id="FB:FBgn0039054"/>
<dbReference type="CTD" id="42733"/>
<dbReference type="FlyBase" id="FBgn0039054">
    <property type="gene designation" value="Cow"/>
</dbReference>
<dbReference type="VEuPathDB" id="VectorBase:FBgn0039054"/>
<dbReference type="eggNOG" id="KOG3555">
    <property type="taxonomic scope" value="Eukaryota"/>
</dbReference>
<dbReference type="GeneTree" id="ENSGT00940000171496"/>
<dbReference type="InParanoid" id="Q9VCR3"/>
<dbReference type="OrthoDB" id="8875634at2759"/>
<dbReference type="PhylomeDB" id="Q9VCR3"/>
<dbReference type="SignaLink" id="Q9VCR3"/>
<dbReference type="BioGRID-ORCS" id="42733">
    <property type="hits" value="0 hits in 3 CRISPR screens"/>
</dbReference>
<dbReference type="ChiTaRS" id="Cow">
    <property type="organism name" value="fly"/>
</dbReference>
<dbReference type="GenomeRNAi" id="42733"/>
<dbReference type="PRO" id="PR:Q9VCR3"/>
<dbReference type="Proteomes" id="UP000000803">
    <property type="component" value="Chromosome 3R"/>
</dbReference>
<dbReference type="Bgee" id="FBgn0039054">
    <property type="expression patterns" value="Expressed in transmedullary neuron Tm29 in insect head and 175 other cell types or tissues"/>
</dbReference>
<dbReference type="ExpressionAtlas" id="Q9VCR3">
    <property type="expression patterns" value="baseline and differential"/>
</dbReference>
<dbReference type="GO" id="GO:0005615">
    <property type="term" value="C:extracellular space"/>
    <property type="evidence" value="ECO:0000314"/>
    <property type="project" value="FlyBase"/>
</dbReference>
<dbReference type="GO" id="GO:0005509">
    <property type="term" value="F:calcium ion binding"/>
    <property type="evidence" value="ECO:0007669"/>
    <property type="project" value="InterPro"/>
</dbReference>
<dbReference type="GO" id="GO:0004867">
    <property type="term" value="F:serine-type endopeptidase inhibitor activity"/>
    <property type="evidence" value="ECO:0007669"/>
    <property type="project" value="UniProtKB-KW"/>
</dbReference>
<dbReference type="GO" id="GO:0017147">
    <property type="term" value="F:Wnt-protein binding"/>
    <property type="evidence" value="ECO:0000353"/>
    <property type="project" value="FlyBase"/>
</dbReference>
<dbReference type="GO" id="GO:0035592">
    <property type="term" value="P:establishment of protein localization to extracellular region"/>
    <property type="evidence" value="ECO:0000315"/>
    <property type="project" value="FlyBase"/>
</dbReference>
<dbReference type="GO" id="GO:0006858">
    <property type="term" value="P:extracellular transport"/>
    <property type="evidence" value="ECO:0000315"/>
    <property type="project" value="FlyBase"/>
</dbReference>
<dbReference type="GO" id="GO:0090090">
    <property type="term" value="P:negative regulation of canonical Wnt signaling pathway"/>
    <property type="evidence" value="ECO:0000315"/>
    <property type="project" value="FlyBase"/>
</dbReference>
<dbReference type="GO" id="GO:0090263">
    <property type="term" value="P:positive regulation of canonical Wnt signaling pathway"/>
    <property type="evidence" value="ECO:0000315"/>
    <property type="project" value="FlyBase"/>
</dbReference>
<dbReference type="GO" id="GO:0007367">
    <property type="term" value="P:segment polarity determination"/>
    <property type="evidence" value="ECO:0000316"/>
    <property type="project" value="FlyBase"/>
</dbReference>
<dbReference type="GO" id="GO:0048190">
    <property type="term" value="P:wing disc dorsal/ventral pattern formation"/>
    <property type="evidence" value="ECO:0000315"/>
    <property type="project" value="FlyBase"/>
</dbReference>
<dbReference type="CDD" id="cd16232">
    <property type="entry name" value="EFh_SPARC_TICN"/>
    <property type="match status" value="1"/>
</dbReference>
<dbReference type="CDD" id="cd00104">
    <property type="entry name" value="KAZAL_FS"/>
    <property type="match status" value="1"/>
</dbReference>
<dbReference type="CDD" id="cd00191">
    <property type="entry name" value="TY"/>
    <property type="match status" value="1"/>
</dbReference>
<dbReference type="FunFam" id="1.10.238.10:FF:000246">
    <property type="entry name" value="Uncharacterized protein, isoform C"/>
    <property type="match status" value="1"/>
</dbReference>
<dbReference type="Gene3D" id="3.30.60.30">
    <property type="match status" value="1"/>
</dbReference>
<dbReference type="Gene3D" id="1.10.238.10">
    <property type="entry name" value="EF-hand"/>
    <property type="match status" value="1"/>
</dbReference>
<dbReference type="Gene3D" id="4.10.800.10">
    <property type="entry name" value="Thyroglobulin type-1"/>
    <property type="match status" value="1"/>
</dbReference>
<dbReference type="InterPro" id="IPR011992">
    <property type="entry name" value="EF-hand-dom_pair"/>
</dbReference>
<dbReference type="InterPro" id="IPR018247">
    <property type="entry name" value="EF_Hand_1_Ca_BS"/>
</dbReference>
<dbReference type="InterPro" id="IPR002350">
    <property type="entry name" value="Kazal_dom"/>
</dbReference>
<dbReference type="InterPro" id="IPR036058">
    <property type="entry name" value="Kazal_dom_sf"/>
</dbReference>
<dbReference type="InterPro" id="IPR019577">
    <property type="entry name" value="SPARC/Testican_Ca-bd-dom"/>
</dbReference>
<dbReference type="InterPro" id="IPR000716">
    <property type="entry name" value="Thyroglobulin_1"/>
</dbReference>
<dbReference type="InterPro" id="IPR036857">
    <property type="entry name" value="Thyroglobulin_1_sf"/>
</dbReference>
<dbReference type="PANTHER" id="PTHR13866:SF30">
    <property type="match status" value="1"/>
</dbReference>
<dbReference type="PANTHER" id="PTHR13866">
    <property type="entry name" value="SPARC OSTEONECTIN"/>
    <property type="match status" value="1"/>
</dbReference>
<dbReference type="Pfam" id="PF07648">
    <property type="entry name" value="Kazal_2"/>
    <property type="match status" value="1"/>
</dbReference>
<dbReference type="Pfam" id="PF10591">
    <property type="entry name" value="SPARC_Ca_bdg"/>
    <property type="match status" value="1"/>
</dbReference>
<dbReference type="Pfam" id="PF00086">
    <property type="entry name" value="Thyroglobulin_1"/>
    <property type="match status" value="1"/>
</dbReference>
<dbReference type="SMART" id="SM00280">
    <property type="entry name" value="KAZAL"/>
    <property type="match status" value="1"/>
</dbReference>
<dbReference type="SMART" id="SM00211">
    <property type="entry name" value="TY"/>
    <property type="match status" value="1"/>
</dbReference>
<dbReference type="SUPFAM" id="SSF47473">
    <property type="entry name" value="EF-hand"/>
    <property type="match status" value="1"/>
</dbReference>
<dbReference type="SUPFAM" id="SSF100895">
    <property type="entry name" value="Kazal-type serine protease inhibitors"/>
    <property type="match status" value="1"/>
</dbReference>
<dbReference type="SUPFAM" id="SSF57610">
    <property type="entry name" value="Thyroglobulin type-1 domain"/>
    <property type="match status" value="1"/>
</dbReference>
<dbReference type="PROSITE" id="PS00018">
    <property type="entry name" value="EF_HAND_1"/>
    <property type="match status" value="1"/>
</dbReference>
<dbReference type="PROSITE" id="PS51465">
    <property type="entry name" value="KAZAL_2"/>
    <property type="match status" value="1"/>
</dbReference>
<dbReference type="PROSITE" id="PS00484">
    <property type="entry name" value="THYROGLOBULIN_1_1"/>
    <property type="match status" value="1"/>
</dbReference>
<dbReference type="PROSITE" id="PS51162">
    <property type="entry name" value="THYROGLOBULIN_1_2"/>
    <property type="match status" value="1"/>
</dbReference>
<comment type="function">
    <text evidence="8">Binds to the Wnt signaling protein wg, stabilizes it and promotes its extracellular distribution. This is required for establishment of a wg gradient during development to allow for regulation of target genes at different levels.</text>
</comment>
<comment type="subunit">
    <text evidence="8">Interacts (in heparan sulfate-bound form) with wg.</text>
</comment>
<comment type="subcellular location">
    <subcellularLocation>
        <location evidence="8">Secreted</location>
    </subcellularLocation>
</comment>
<comment type="tissue specificity">
    <text evidence="8">In the wing disk, detected throughout the disk where it is localized primarily to the apical surface but is also present at the basal surface (at protein level).</text>
</comment>
<comment type="PTM">
    <text evidence="8">Contains heparan sulfate O-linked oligosaccharides.</text>
</comment>
<comment type="disruption phenotype">
    <text evidence="8">Predominantly embryonic lethal with 50% of embryos dying before cuticle formation and 10% showing a weak denticle belt fusion phenotype. RNAi-mediated knockdown in the developing wing results in development of ectopic chemosensory bristles along or near the wing margin on both the anterior and posterior sides.</text>
</comment>
<proteinExistence type="evidence at protein level"/>
<keyword id="KW-0106">Calcium</keyword>
<keyword id="KW-1015">Disulfide bond</keyword>
<keyword id="KW-0325">Glycoprotein</keyword>
<keyword id="KW-0357">Heparan sulfate</keyword>
<keyword id="KW-0479">Metal-binding</keyword>
<keyword id="KW-0646">Protease inhibitor</keyword>
<keyword id="KW-0654">Proteoglycan</keyword>
<keyword id="KW-1185">Reference proteome</keyword>
<keyword id="KW-0677">Repeat</keyword>
<keyword id="KW-0964">Secreted</keyword>
<keyword id="KW-0722">Serine protease inhibitor</keyword>
<keyword id="KW-0732">Signal</keyword>
<protein>
    <recommendedName>
        <fullName evidence="10">Proteoglycan Cow</fullName>
    </recommendedName>
    <alternativeName>
        <fullName evidence="9">Carrier of wingless</fullName>
        <shortName evidence="9">Carrier of wg</shortName>
    </alternativeName>
</protein>
<feature type="signal peptide" evidence="1">
    <location>
        <begin position="1"/>
        <end position="27"/>
    </location>
</feature>
<feature type="chain" id="PRO_5007216230" description="Proteoglycan Cow" evidence="1">
    <location>
        <begin position="28"/>
        <end position="629"/>
    </location>
</feature>
<feature type="domain" description="Kazal-like" evidence="5">
    <location>
        <begin position="222"/>
        <end position="273"/>
    </location>
</feature>
<feature type="domain" description="EF-hand 1" evidence="2">
    <location>
        <begin position="468"/>
        <end position="503"/>
    </location>
</feature>
<feature type="domain" description="EF-hand 2" evidence="2">
    <location>
        <begin position="508"/>
        <end position="535"/>
    </location>
</feature>
<feature type="domain" description="Thyroglobulin type-1" evidence="4">
    <location>
        <begin position="533"/>
        <end position="594"/>
    </location>
</feature>
<feature type="region of interest" description="Disordered" evidence="7">
    <location>
        <begin position="118"/>
        <end position="186"/>
    </location>
</feature>
<feature type="region of interest" description="Disordered" evidence="7">
    <location>
        <begin position="198"/>
        <end position="223"/>
    </location>
</feature>
<feature type="region of interest" description="Disordered" evidence="7">
    <location>
        <begin position="298"/>
        <end position="356"/>
    </location>
</feature>
<feature type="region of interest" description="Disordered" evidence="7">
    <location>
        <begin position="602"/>
        <end position="629"/>
    </location>
</feature>
<feature type="compositionally biased region" description="Acidic residues" evidence="7">
    <location>
        <begin position="128"/>
        <end position="143"/>
    </location>
</feature>
<feature type="compositionally biased region" description="Low complexity" evidence="7">
    <location>
        <begin position="144"/>
        <end position="159"/>
    </location>
</feature>
<feature type="compositionally biased region" description="Acidic residues" evidence="7">
    <location>
        <begin position="167"/>
        <end position="186"/>
    </location>
</feature>
<feature type="compositionally biased region" description="Low complexity" evidence="7">
    <location>
        <begin position="301"/>
        <end position="340"/>
    </location>
</feature>
<feature type="compositionally biased region" description="Acidic residues" evidence="7">
    <location>
        <begin position="606"/>
        <end position="619"/>
    </location>
</feature>
<feature type="compositionally biased region" description="Low complexity" evidence="7">
    <location>
        <begin position="620"/>
        <end position="629"/>
    </location>
</feature>
<feature type="binding site" evidence="6">
    <location>
        <position position="481"/>
    </location>
    <ligand>
        <name>Ca(2+)</name>
        <dbReference type="ChEBI" id="CHEBI:29108"/>
    </ligand>
</feature>
<feature type="binding site" evidence="6">
    <location>
        <position position="483"/>
    </location>
    <ligand>
        <name>Ca(2+)</name>
        <dbReference type="ChEBI" id="CHEBI:29108"/>
    </ligand>
</feature>
<feature type="binding site" evidence="6">
    <location>
        <position position="485"/>
    </location>
    <ligand>
        <name>Ca(2+)</name>
        <dbReference type="ChEBI" id="CHEBI:29108"/>
    </ligand>
</feature>
<feature type="binding site" evidence="6">
    <location>
        <position position="487"/>
    </location>
    <ligand>
        <name>Ca(2+)</name>
        <dbReference type="ChEBI" id="CHEBI:29108"/>
    </ligand>
</feature>
<feature type="binding site" evidence="6">
    <location>
        <position position="492"/>
    </location>
    <ligand>
        <name>Ca(2+)</name>
        <dbReference type="ChEBI" id="CHEBI:29108"/>
    </ligand>
</feature>
<feature type="site" description="Reactive bond" evidence="5">
    <location>
        <begin position="233"/>
        <end position="234"/>
    </location>
</feature>
<feature type="glycosylation site" description="N-linked (GlcNAc...) asparagine" evidence="3">
    <location>
        <position position="142"/>
    </location>
</feature>
<feature type="glycosylation site" description="N-linked (GlcNAc...) asparagine" evidence="3">
    <location>
        <position position="244"/>
    </location>
</feature>
<feature type="disulfide bond" evidence="5">
    <location>
        <begin position="228"/>
        <end position="258"/>
    </location>
</feature>
<feature type="disulfide bond" evidence="5">
    <location>
        <begin position="231"/>
        <end position="251"/>
    </location>
</feature>
<feature type="disulfide bond" evidence="5">
    <location>
        <begin position="240"/>
        <end position="272"/>
    </location>
</feature>
<feature type="disulfide bond" evidence="4">
    <location>
        <begin position="536"/>
        <end position="555"/>
    </location>
</feature>
<feature type="disulfide bond" evidence="4">
    <location>
        <begin position="566"/>
        <end position="573"/>
    </location>
</feature>
<feature type="disulfide bond" evidence="4">
    <location>
        <begin position="575"/>
        <end position="594"/>
    </location>
</feature>
<feature type="mutagenesis site" description="Abolishes interaction with wg and causes significant reduction of 100 kDa form which is likely to be the heparan sulfate-modified form; when associated with A-331 and A-332." evidence="8">
    <original>SG</original>
    <variation>AA</variation>
    <location>
        <begin position="287"/>
        <end position="288"/>
    </location>
</feature>
<feature type="mutagenesis site" description="Abolishes interaction with wg and causes significant reduction of 100 kDa form which is likely to be the heparan sulfate-modified form; when associated with A-287 and A-288." evidence="8">
    <original>SG</original>
    <variation>AA</variation>
    <location>
        <begin position="331"/>
        <end position="332"/>
    </location>
</feature>
<gene>
    <name evidence="12" type="primary">Cow</name>
    <name evidence="12" type="ORF">CG13830</name>
</gene>
<name>COW_DROME</name>
<evidence type="ECO:0000255" key="1"/>
<evidence type="ECO:0000255" key="2">
    <source>
        <dbReference type="PROSITE-ProRule" id="PRU00448"/>
    </source>
</evidence>
<evidence type="ECO:0000255" key="3">
    <source>
        <dbReference type="PROSITE-ProRule" id="PRU00498"/>
    </source>
</evidence>
<evidence type="ECO:0000255" key="4">
    <source>
        <dbReference type="PROSITE-ProRule" id="PRU00500"/>
    </source>
</evidence>
<evidence type="ECO:0000255" key="5">
    <source>
        <dbReference type="PROSITE-ProRule" id="PRU00798"/>
    </source>
</evidence>
<evidence type="ECO:0000255" key="6">
    <source>
        <dbReference type="PROSITE-ProRule" id="PRU10142"/>
    </source>
</evidence>
<evidence type="ECO:0000256" key="7">
    <source>
        <dbReference type="SAM" id="MobiDB-lite"/>
    </source>
</evidence>
<evidence type="ECO:0000269" key="8">
    <source>
    </source>
</evidence>
<evidence type="ECO:0000303" key="9">
    <source>
    </source>
</evidence>
<evidence type="ECO:0000305" key="10"/>
<evidence type="ECO:0000312" key="11">
    <source>
        <dbReference type="EMBL" id="ACH92517.1"/>
    </source>
</evidence>
<evidence type="ECO:0000312" key="12">
    <source>
        <dbReference type="FlyBase" id="FBgn0039054"/>
    </source>
</evidence>
<evidence type="ECO:0000312" key="13">
    <source>
        <dbReference type="Proteomes" id="UP000000803"/>
    </source>
</evidence>
<accession>Q9VCR3</accession>
<accession>B5RJH8</accession>